<comment type="function">
    <text evidence="1">Probably involved in the control of the structural glucose backbone of osmoregulated periplasmic glucans (OPGs).</text>
</comment>
<comment type="pathway">
    <text evidence="1">Glycan metabolism; osmoregulated periplasmic glucan (OPG) biosynthesis.</text>
</comment>
<comment type="subcellular location">
    <subcellularLocation>
        <location evidence="1">Periplasm</location>
    </subcellularLocation>
</comment>
<comment type="PTM">
    <text>Predicted to be exported by the Tat system. The position of the signal peptide cleavage has not been experimentally proven.</text>
</comment>
<comment type="similarity">
    <text evidence="1">Belongs to the OpgD/OpgG family.</text>
</comment>
<evidence type="ECO:0000255" key="1">
    <source>
        <dbReference type="HAMAP-Rule" id="MF_01068"/>
    </source>
</evidence>
<protein>
    <recommendedName>
        <fullName evidence="1">Glucans biosynthesis protein D</fullName>
    </recommendedName>
</protein>
<accession>B0U613</accession>
<dbReference type="EMBL" id="CP000941">
    <property type="protein sequence ID" value="ACA13085.1"/>
    <property type="molecule type" value="Genomic_DNA"/>
</dbReference>
<dbReference type="SMR" id="B0U613"/>
<dbReference type="KEGG" id="xfm:Xfasm12_2234"/>
<dbReference type="HOGENOM" id="CLU_023403_2_0_6"/>
<dbReference type="UniPathway" id="UPA00637"/>
<dbReference type="GO" id="GO:0030288">
    <property type="term" value="C:outer membrane-bounded periplasmic space"/>
    <property type="evidence" value="ECO:0007669"/>
    <property type="project" value="TreeGrafter"/>
</dbReference>
<dbReference type="GO" id="GO:0030246">
    <property type="term" value="F:carbohydrate binding"/>
    <property type="evidence" value="ECO:0007669"/>
    <property type="project" value="InterPro"/>
</dbReference>
<dbReference type="GO" id="GO:0003824">
    <property type="term" value="F:catalytic activity"/>
    <property type="evidence" value="ECO:0007669"/>
    <property type="project" value="InterPro"/>
</dbReference>
<dbReference type="GO" id="GO:0051274">
    <property type="term" value="P:beta-glucan biosynthetic process"/>
    <property type="evidence" value="ECO:0007669"/>
    <property type="project" value="TreeGrafter"/>
</dbReference>
<dbReference type="FunFam" id="2.70.98.10:FF:000001">
    <property type="entry name" value="Glucans biosynthesis protein G"/>
    <property type="match status" value="1"/>
</dbReference>
<dbReference type="Gene3D" id="2.70.98.10">
    <property type="match status" value="1"/>
</dbReference>
<dbReference type="Gene3D" id="2.60.40.10">
    <property type="entry name" value="Immunoglobulins"/>
    <property type="match status" value="1"/>
</dbReference>
<dbReference type="HAMAP" id="MF_01068">
    <property type="entry name" value="MdoD_OpgD"/>
    <property type="match status" value="1"/>
</dbReference>
<dbReference type="InterPro" id="IPR011013">
    <property type="entry name" value="Gal_mutarotase_sf_dom"/>
</dbReference>
<dbReference type="InterPro" id="IPR014718">
    <property type="entry name" value="GH-type_carb-bd"/>
</dbReference>
<dbReference type="InterPro" id="IPR023724">
    <property type="entry name" value="Glucan_biosyn_MdoD"/>
</dbReference>
<dbReference type="InterPro" id="IPR014438">
    <property type="entry name" value="Glucan_biosyn_MdoG/MdoD"/>
</dbReference>
<dbReference type="InterPro" id="IPR007444">
    <property type="entry name" value="Glucan_biosyn_MdoG_C"/>
</dbReference>
<dbReference type="InterPro" id="IPR013783">
    <property type="entry name" value="Ig-like_fold"/>
</dbReference>
<dbReference type="InterPro" id="IPR014756">
    <property type="entry name" value="Ig_E-set"/>
</dbReference>
<dbReference type="InterPro" id="IPR006311">
    <property type="entry name" value="TAT_signal"/>
</dbReference>
<dbReference type="PANTHER" id="PTHR30504">
    <property type="entry name" value="GLUCANS BIOSYNTHESIS PROTEIN"/>
    <property type="match status" value="1"/>
</dbReference>
<dbReference type="PANTHER" id="PTHR30504:SF3">
    <property type="entry name" value="GLUCANS BIOSYNTHESIS PROTEIN D"/>
    <property type="match status" value="1"/>
</dbReference>
<dbReference type="Pfam" id="PF04349">
    <property type="entry name" value="MdoG"/>
    <property type="match status" value="1"/>
</dbReference>
<dbReference type="PIRSF" id="PIRSF006281">
    <property type="entry name" value="MdoG"/>
    <property type="match status" value="1"/>
</dbReference>
<dbReference type="SUPFAM" id="SSF81296">
    <property type="entry name" value="E set domains"/>
    <property type="match status" value="1"/>
</dbReference>
<dbReference type="SUPFAM" id="SSF74650">
    <property type="entry name" value="Galactose mutarotase-like"/>
    <property type="match status" value="1"/>
</dbReference>
<dbReference type="PROSITE" id="PS51318">
    <property type="entry name" value="TAT"/>
    <property type="match status" value="1"/>
</dbReference>
<proteinExistence type="inferred from homology"/>
<gene>
    <name evidence="1" type="primary">opgD</name>
    <name type="ordered locus">Xfasm12_2234</name>
</gene>
<sequence>MLMYRRDFLKSVTAAWVAFGLPNPLGGAFATNRVIALRRLGQSQRFDYELLKERARALAAAPYHSRKRVLPTPLERLSWDQYQSIRYRQDHALWADSDAHFQVKFFHLGLYFHSPVRMYEVVDGMAQELAYDPAAFDYGSSGLNGKGLPKDLGFAGFRLNTRKDTDRDFAAFLGASYFRAVGQEGQYGQSARGLAVNTGSSGPEEFPDFIAYYLEQPTSDADTVVMYGLLDSPSIAGAYRFSITHADVLRMDIDSALYPRETIERLGIAPCTSMYQVGENDRRMGWDWRPEIHDTDGLFLWTGNGEWIWRPLCNPLHLRFNMFLDNNPRGFGLLQRDRDFDHYQDDGVFYEKRPCLWVEPKHGWGEGSVQLVEIPTFDETFDNIVAFWNPRNKPHPGQELLFGYRLYWGALPPVSSSLAYCVATRTGLGGVVGQKRKYFSWRFAVDFVGGKLAALARVHDVSVEPVLHMTRGRPEIVSARPLHEIRGYRVMFDVVPLEDSAQQIDIRLYLRDTNGEPLTETWLYQWMPPILEERKIY</sequence>
<feature type="signal peptide" description="Tat-type signal" evidence="1">
    <location>
        <begin position="1"/>
        <end position="30"/>
    </location>
</feature>
<feature type="chain" id="PRO_1000136606" description="Glucans biosynthesis protein D">
    <location>
        <begin position="31"/>
        <end position="537"/>
    </location>
</feature>
<organism>
    <name type="scientific">Xylella fastidiosa (strain M12)</name>
    <dbReference type="NCBI Taxonomy" id="405440"/>
    <lineage>
        <taxon>Bacteria</taxon>
        <taxon>Pseudomonadati</taxon>
        <taxon>Pseudomonadota</taxon>
        <taxon>Gammaproteobacteria</taxon>
        <taxon>Lysobacterales</taxon>
        <taxon>Lysobacteraceae</taxon>
        <taxon>Xylella</taxon>
    </lineage>
</organism>
<reference key="1">
    <citation type="journal article" date="2010" name="J. Bacteriol.">
        <title>Whole genome sequences of two Xylella fastidiosa strains (M12 and M23) causing almond leaf scorch disease in California.</title>
        <authorList>
            <person name="Chen J."/>
            <person name="Xie G."/>
            <person name="Han S."/>
            <person name="Chertkov O."/>
            <person name="Sims D."/>
            <person name="Civerolo E.L."/>
        </authorList>
    </citation>
    <scope>NUCLEOTIDE SEQUENCE [LARGE SCALE GENOMIC DNA]</scope>
    <source>
        <strain>M12</strain>
    </source>
</reference>
<keyword id="KW-0574">Periplasm</keyword>
<keyword id="KW-0732">Signal</keyword>
<name>OPGD_XYLFM</name>